<organism>
    <name type="scientific">Mus musculus</name>
    <name type="common">Mouse</name>
    <dbReference type="NCBI Taxonomy" id="10090"/>
    <lineage>
        <taxon>Eukaryota</taxon>
        <taxon>Metazoa</taxon>
        <taxon>Chordata</taxon>
        <taxon>Craniata</taxon>
        <taxon>Vertebrata</taxon>
        <taxon>Euteleostomi</taxon>
        <taxon>Mammalia</taxon>
        <taxon>Eutheria</taxon>
        <taxon>Euarchontoglires</taxon>
        <taxon>Glires</taxon>
        <taxon>Rodentia</taxon>
        <taxon>Myomorpha</taxon>
        <taxon>Muroidea</taxon>
        <taxon>Muridae</taxon>
        <taxon>Murinae</taxon>
        <taxon>Mus</taxon>
        <taxon>Mus</taxon>
    </lineage>
</organism>
<comment type="function">
    <text>Mediates cellular uptake of transferrin-bound iron in a non-iron dependent manner. May be involved in iron metabolism, hepatocyte function and erythrocyte differentiation.</text>
</comment>
<comment type="subcellular location">
    <subcellularLocation>
        <location>Cell membrane</location>
        <topology>Single-pass type II membrane protein</topology>
    </subcellularLocation>
</comment>
<comment type="subcellular location">
    <molecule>Isoform 3</molecule>
    <subcellularLocation>
        <location>Cytoplasm</location>
    </subcellularLocation>
</comment>
<comment type="alternative products">
    <event type="alternative splicing"/>
    <isoform>
        <id>Q9JKX3-1</id>
        <name>1</name>
        <sequence type="displayed"/>
    </isoform>
    <isoform>
        <id>Q9JKX3-2</id>
        <name>2</name>
        <sequence type="described" ref="VSP_005357 VSP_005358"/>
    </isoform>
    <isoform>
        <id>Q9JKX3-3</id>
        <name>3</name>
        <sequence type="described" ref="VSP_005356"/>
    </isoform>
</comment>
<comment type="tissue specificity">
    <text>Predominantly expressed in liver. Also expressed in kidney, spleen, brain, lung, heart and muscle with very low expression in kidney, muscle and heart.</text>
</comment>
<comment type="developmental stage">
    <text>First expressed between embryo days 8 and 11. In the liver, expression increases during development from embryo day 13 to adulthood while, in the spleen, levels remain constant throughout development.</text>
</comment>
<comment type="induction">
    <text>Down-regulated during erythrocyte differentiation. Expression unchanged by cellular iron status.</text>
</comment>
<comment type="miscellaneous">
    <molecule>Isoform 2</molecule>
    <text evidence="3">Lacks most of the extracellular domain.</text>
</comment>
<comment type="similarity">
    <text evidence="3">Belongs to the peptidase M28 family. M28B subfamily.</text>
</comment>
<dbReference type="EMBL" id="AF222895">
    <property type="protein sequence ID" value="AAF37272.1"/>
    <property type="molecule type" value="mRNA"/>
</dbReference>
<dbReference type="EMBL" id="AF207741">
    <property type="protein sequence ID" value="AAL05976.1"/>
    <property type="molecule type" value="mRNA"/>
</dbReference>
<dbReference type="EMBL" id="AF207742">
    <property type="protein sequence ID" value="AAL05977.1"/>
    <property type="molecule type" value="Genomic_DNA"/>
</dbReference>
<dbReference type="EMBL" id="AK004965">
    <property type="protein sequence ID" value="BAB23705.1"/>
    <property type="molecule type" value="mRNA"/>
</dbReference>
<dbReference type="EMBL" id="AK004848">
    <property type="protein sequence ID" value="BAB23614.1"/>
    <property type="molecule type" value="mRNA"/>
</dbReference>
<dbReference type="EMBL" id="BC013654">
    <property type="protein sequence ID" value="AAH13654.1"/>
    <property type="molecule type" value="mRNA"/>
</dbReference>
<dbReference type="EMBL" id="AF312033">
    <property type="protein sequence ID" value="AAK28830.1"/>
    <property type="molecule type" value="Genomic_DNA"/>
</dbReference>
<dbReference type="CCDS" id="CCDS39333.1">
    <molecule id="Q9JKX3-1"/>
</dbReference>
<dbReference type="RefSeq" id="NP_001276436.2">
    <molecule id="Q9JKX3-1"/>
    <property type="nucleotide sequence ID" value="NM_001289507.3"/>
</dbReference>
<dbReference type="RefSeq" id="NP_001276438.1">
    <molecule id="Q9JKX3-1"/>
    <property type="nucleotide sequence ID" value="NM_001289509.2"/>
</dbReference>
<dbReference type="RefSeq" id="NP_001276440.1">
    <molecule id="Q9JKX3-1"/>
    <property type="nucleotide sequence ID" value="NM_001289511.2"/>
</dbReference>
<dbReference type="RefSeq" id="NP_001346135.1">
    <molecule id="Q9JKX3-1"/>
    <property type="nucleotide sequence ID" value="NM_001359206.2"/>
</dbReference>
<dbReference type="RefSeq" id="NP_001412434.1">
    <molecule id="Q9JKX3-1"/>
    <property type="nucleotide sequence ID" value="NM_001425505.1"/>
</dbReference>
<dbReference type="RefSeq" id="NP_001412435.1">
    <molecule id="Q9JKX3-1"/>
    <property type="nucleotide sequence ID" value="NM_001425506.1"/>
</dbReference>
<dbReference type="RefSeq" id="NP_001412436.1">
    <molecule id="Q9JKX3-1"/>
    <property type="nucleotide sequence ID" value="NM_001425507.1"/>
</dbReference>
<dbReference type="RefSeq" id="NP_056614.3">
    <molecule id="Q9JKX3-1"/>
    <property type="nucleotide sequence ID" value="NM_015799.4"/>
</dbReference>
<dbReference type="RefSeq" id="XP_006504656.1">
    <property type="nucleotide sequence ID" value="XM_006504593.3"/>
</dbReference>
<dbReference type="RefSeq" id="XP_006504657.1">
    <property type="nucleotide sequence ID" value="XM_006504594.3"/>
</dbReference>
<dbReference type="RefSeq" id="XP_011239249.1">
    <property type="nucleotide sequence ID" value="XM_011240947.2"/>
</dbReference>
<dbReference type="SMR" id="Q9JKX3"/>
<dbReference type="BioGRID" id="206097">
    <property type="interactions" value="2"/>
</dbReference>
<dbReference type="FunCoup" id="Q9JKX3">
    <property type="interactions" value="117"/>
</dbReference>
<dbReference type="IntAct" id="Q9JKX3">
    <property type="interactions" value="1"/>
</dbReference>
<dbReference type="MINT" id="Q9JKX3"/>
<dbReference type="STRING" id="10090.ENSMUSP00000142720"/>
<dbReference type="MEROPS" id="M28.973"/>
<dbReference type="GlyCosmos" id="Q9JKX3">
    <property type="glycosylation" value="3 sites, No reported glycans"/>
</dbReference>
<dbReference type="GlyGen" id="Q9JKX3">
    <property type="glycosylation" value="3 sites"/>
</dbReference>
<dbReference type="iPTMnet" id="Q9JKX3"/>
<dbReference type="PhosphoSitePlus" id="Q9JKX3"/>
<dbReference type="SwissPalm" id="Q9JKX3"/>
<dbReference type="jPOST" id="Q9JKX3"/>
<dbReference type="PaxDb" id="10090-ENSMUSP00000031729"/>
<dbReference type="PeptideAtlas" id="Q9JKX3"/>
<dbReference type="ProteomicsDB" id="262893">
    <molecule id="Q9JKX3-1"/>
</dbReference>
<dbReference type="ProteomicsDB" id="262894">
    <molecule id="Q9JKX3-2"/>
</dbReference>
<dbReference type="ProteomicsDB" id="262895">
    <molecule id="Q9JKX3-3"/>
</dbReference>
<dbReference type="Antibodypedia" id="2306">
    <property type="antibodies" value="214 antibodies from 29 providers"/>
</dbReference>
<dbReference type="DNASU" id="50765"/>
<dbReference type="Ensembl" id="ENSMUST00000031729.13">
    <molecule id="Q9JKX3-1"/>
    <property type="protein sequence ID" value="ENSMUSP00000031729.9"/>
    <property type="gene ID" value="ENSMUSG00000029716.14"/>
</dbReference>
<dbReference type="Ensembl" id="ENSMUST00000196471.5">
    <molecule id="Q9JKX3-1"/>
    <property type="protein sequence ID" value="ENSMUSP00000142814.2"/>
    <property type="gene ID" value="ENSMUSG00000029716.14"/>
</dbReference>
<dbReference type="Ensembl" id="ENSMUST00000198783.5">
    <molecule id="Q9JKX3-1"/>
    <property type="protein sequence ID" value="ENSMUSP00000142502.2"/>
    <property type="gene ID" value="ENSMUSG00000029716.14"/>
</dbReference>
<dbReference type="Ensembl" id="ENSMUST00000198866.5">
    <molecule id="Q9JKX3-1"/>
    <property type="protein sequence ID" value="ENSMUSP00000142720.2"/>
    <property type="gene ID" value="ENSMUSG00000029716.14"/>
</dbReference>
<dbReference type="Ensembl" id="ENSMUST00000199054.5">
    <molecule id="Q9JKX3-1"/>
    <property type="protein sequence ID" value="ENSMUSP00000142478.2"/>
    <property type="gene ID" value="ENSMUSG00000029716.14"/>
</dbReference>
<dbReference type="GeneID" id="50765"/>
<dbReference type="KEGG" id="mmu:50765"/>
<dbReference type="UCSC" id="uc009acv.2">
    <molecule id="Q9JKX3-1"/>
    <property type="organism name" value="mouse"/>
</dbReference>
<dbReference type="AGR" id="MGI:1354956"/>
<dbReference type="CTD" id="7036"/>
<dbReference type="MGI" id="MGI:1354956">
    <property type="gene designation" value="Tfr2"/>
</dbReference>
<dbReference type="VEuPathDB" id="HostDB:ENSMUSG00000029716"/>
<dbReference type="eggNOG" id="KOG2195">
    <property type="taxonomic scope" value="Eukaryota"/>
</dbReference>
<dbReference type="GeneTree" id="ENSGT01030000234598"/>
<dbReference type="InParanoid" id="Q9JKX3"/>
<dbReference type="OMA" id="QVVFNNH"/>
<dbReference type="OrthoDB" id="5841748at2759"/>
<dbReference type="PhylomeDB" id="Q9JKX3"/>
<dbReference type="TreeFam" id="TF312981"/>
<dbReference type="Reactome" id="R-MMU-917977">
    <property type="pathway name" value="Transferrin endocytosis and recycling"/>
</dbReference>
<dbReference type="BioGRID-ORCS" id="50765">
    <property type="hits" value="1 hit in 79 CRISPR screens"/>
</dbReference>
<dbReference type="ChiTaRS" id="Tfr2">
    <property type="organism name" value="mouse"/>
</dbReference>
<dbReference type="PRO" id="PR:Q9JKX3"/>
<dbReference type="Proteomes" id="UP000000589">
    <property type="component" value="Chromosome 5"/>
</dbReference>
<dbReference type="RNAct" id="Q9JKX3">
    <property type="molecule type" value="protein"/>
</dbReference>
<dbReference type="Bgee" id="ENSMUSG00000029716">
    <property type="expression patterns" value="Expressed in left lobe of liver and 146 other cell types or tissues"/>
</dbReference>
<dbReference type="ExpressionAtlas" id="Q9JKX3">
    <property type="expression patterns" value="baseline and differential"/>
</dbReference>
<dbReference type="GO" id="GO:0031410">
    <property type="term" value="C:cytoplasmic vesicle"/>
    <property type="evidence" value="ECO:0007669"/>
    <property type="project" value="Ensembl"/>
</dbReference>
<dbReference type="GO" id="GO:0009897">
    <property type="term" value="C:external side of plasma membrane"/>
    <property type="evidence" value="ECO:0007669"/>
    <property type="project" value="Ensembl"/>
</dbReference>
<dbReference type="GO" id="GO:1990712">
    <property type="term" value="C:HFE-transferrin receptor complex"/>
    <property type="evidence" value="ECO:0000314"/>
    <property type="project" value="BHF-UCL"/>
</dbReference>
<dbReference type="GO" id="GO:0016020">
    <property type="term" value="C:membrane"/>
    <property type="evidence" value="ECO:0000247"/>
    <property type="project" value="MGI"/>
</dbReference>
<dbReference type="GO" id="GO:0039706">
    <property type="term" value="F:co-receptor binding"/>
    <property type="evidence" value="ECO:0007669"/>
    <property type="project" value="Ensembl"/>
</dbReference>
<dbReference type="GO" id="GO:0004998">
    <property type="term" value="F:transferrin receptor activity"/>
    <property type="evidence" value="ECO:0000304"/>
    <property type="project" value="MGI"/>
</dbReference>
<dbReference type="GO" id="GO:0071281">
    <property type="term" value="P:cellular response to iron ion"/>
    <property type="evidence" value="ECO:0007669"/>
    <property type="project" value="Ensembl"/>
</dbReference>
<dbReference type="GO" id="GO:0140298">
    <property type="term" value="P:endocytic iron import into cell"/>
    <property type="evidence" value="ECO:0007669"/>
    <property type="project" value="Ensembl"/>
</dbReference>
<dbReference type="GO" id="GO:0006879">
    <property type="term" value="P:intracellular iron ion homeostasis"/>
    <property type="evidence" value="ECO:0000304"/>
    <property type="project" value="MGI"/>
</dbReference>
<dbReference type="GO" id="GO:0060586">
    <property type="term" value="P:multicellular organismal-level iron ion homeostasis"/>
    <property type="evidence" value="ECO:0000315"/>
    <property type="project" value="MGI"/>
</dbReference>
<dbReference type="GO" id="GO:0045807">
    <property type="term" value="P:positive regulation of endocytosis"/>
    <property type="evidence" value="ECO:0007669"/>
    <property type="project" value="Ensembl"/>
</dbReference>
<dbReference type="GO" id="GO:0090277">
    <property type="term" value="P:positive regulation of peptide hormone secretion"/>
    <property type="evidence" value="ECO:0007669"/>
    <property type="project" value="Ensembl"/>
</dbReference>
<dbReference type="GO" id="GO:1903319">
    <property type="term" value="P:positive regulation of protein maturation"/>
    <property type="evidence" value="ECO:0007669"/>
    <property type="project" value="Ensembl"/>
</dbReference>
<dbReference type="GO" id="GO:0045944">
    <property type="term" value="P:positive regulation of transcription by RNA polymerase II"/>
    <property type="evidence" value="ECO:0007669"/>
    <property type="project" value="Ensembl"/>
</dbReference>
<dbReference type="GO" id="GO:0033572">
    <property type="term" value="P:transferrin transport"/>
    <property type="evidence" value="ECO:0007669"/>
    <property type="project" value="Ensembl"/>
</dbReference>
<dbReference type="CDD" id="cd09848">
    <property type="entry name" value="M28_TfR"/>
    <property type="match status" value="1"/>
</dbReference>
<dbReference type="CDD" id="cd02128">
    <property type="entry name" value="PA_TfR"/>
    <property type="match status" value="1"/>
</dbReference>
<dbReference type="FunFam" id="1.20.930.40:FF:000002">
    <property type="entry name" value="Transferrin receptor protein 1"/>
    <property type="match status" value="1"/>
</dbReference>
<dbReference type="FunFam" id="3.50.30.30:FF:000010">
    <property type="entry name" value="Transferrin receptor protein 1"/>
    <property type="match status" value="1"/>
</dbReference>
<dbReference type="FunFam" id="3.40.630.10:FF:000046">
    <property type="entry name" value="transferrin receptor protein 2 isoform X1"/>
    <property type="match status" value="1"/>
</dbReference>
<dbReference type="Gene3D" id="3.50.30.30">
    <property type="match status" value="1"/>
</dbReference>
<dbReference type="Gene3D" id="1.20.930.40">
    <property type="entry name" value="Transferrin receptor-like, dimerisation domain"/>
    <property type="match status" value="1"/>
</dbReference>
<dbReference type="Gene3D" id="3.40.630.10">
    <property type="entry name" value="Zn peptidases"/>
    <property type="match status" value="1"/>
</dbReference>
<dbReference type="InterPro" id="IPR046450">
    <property type="entry name" value="PA_dom_sf"/>
</dbReference>
<dbReference type="InterPro" id="IPR003137">
    <property type="entry name" value="PA_domain"/>
</dbReference>
<dbReference type="InterPro" id="IPR007484">
    <property type="entry name" value="Peptidase_M28"/>
</dbReference>
<dbReference type="InterPro" id="IPR039373">
    <property type="entry name" value="Peptidase_M28B"/>
</dbReference>
<dbReference type="InterPro" id="IPR036757">
    <property type="entry name" value="TFR-like_dimer_dom_sf"/>
</dbReference>
<dbReference type="InterPro" id="IPR037324">
    <property type="entry name" value="TfR1/2_PA"/>
</dbReference>
<dbReference type="PANTHER" id="PTHR10404">
    <property type="entry name" value="N-ACETYLATED-ALPHA-LINKED ACIDIC DIPEPTIDASE"/>
    <property type="match status" value="1"/>
</dbReference>
<dbReference type="PANTHER" id="PTHR10404:SF33">
    <property type="entry name" value="TRANSFERRIN RECEPTOR PROTEIN 2"/>
    <property type="match status" value="1"/>
</dbReference>
<dbReference type="Pfam" id="PF02225">
    <property type="entry name" value="PA"/>
    <property type="match status" value="1"/>
</dbReference>
<dbReference type="Pfam" id="PF04389">
    <property type="entry name" value="Peptidase_M28"/>
    <property type="match status" value="1"/>
</dbReference>
<dbReference type="SUPFAM" id="SSF52025">
    <property type="entry name" value="PA domain"/>
    <property type="match status" value="1"/>
</dbReference>
<dbReference type="SUPFAM" id="SSF47672">
    <property type="entry name" value="Transferrin receptor-like dimerisation domain"/>
    <property type="match status" value="1"/>
</dbReference>
<dbReference type="SUPFAM" id="SSF53187">
    <property type="entry name" value="Zn-dependent exopeptidases"/>
    <property type="match status" value="1"/>
</dbReference>
<gene>
    <name type="primary">Tfr2</name>
    <name type="synonym">Trfr2</name>
</gene>
<evidence type="ECO:0000255" key="1"/>
<evidence type="ECO:0000303" key="2">
    <source>
    </source>
</evidence>
<evidence type="ECO:0000305" key="3"/>
<protein>
    <recommendedName>
        <fullName>Transferrin receptor protein 2</fullName>
        <shortName>TfR2</shortName>
    </recommendedName>
</protein>
<feature type="chain" id="PRO_0000174137" description="Transferrin receptor protein 2">
    <location>
        <begin position="1"/>
        <end position="798"/>
    </location>
</feature>
<feature type="topological domain" description="Cytoplasmic" evidence="1">
    <location>
        <begin position="1"/>
        <end position="81"/>
    </location>
</feature>
<feature type="transmembrane region" description="Helical; Signal-anchor for type II membrane protein" evidence="1">
    <location>
        <begin position="82"/>
        <end position="102"/>
    </location>
</feature>
<feature type="topological domain" description="Extracellular" evidence="1">
    <location>
        <begin position="103"/>
        <end position="798"/>
    </location>
</feature>
<feature type="short sequence motif" description="Endocytosis signal" evidence="1">
    <location>
        <begin position="23"/>
        <end position="26"/>
    </location>
</feature>
<feature type="glycosylation site" description="N-linked (GlcNAc...) asparagine" evidence="1">
    <location>
        <position position="235"/>
    </location>
</feature>
<feature type="glycosylation site" description="N-linked (GlcNAc...) asparagine" evidence="1">
    <location>
        <position position="334"/>
    </location>
</feature>
<feature type="glycosylation site" description="N-linked (GlcNAc...) asparagine" evidence="1">
    <location>
        <position position="535"/>
    </location>
</feature>
<feature type="disulfide bond" description="Interchain" evidence="1">
    <location>
        <position position="106"/>
    </location>
</feature>
<feature type="disulfide bond" description="Interchain" evidence="1">
    <location>
        <position position="109"/>
    </location>
</feature>
<feature type="splice variant" id="VSP_005356" description="In isoform 3." evidence="2">
    <location>
        <begin position="12"/>
        <end position="93"/>
    </location>
</feature>
<feature type="splice variant" id="VSP_005357" description="In isoform 2." evidence="2">
    <original>T</original>
    <variation>TVRFPGWGAHHVLIG</variation>
    <location>
        <position position="237"/>
    </location>
</feature>
<feature type="splice variant" id="VSP_005358" description="In isoform 2." evidence="2">
    <location>
        <begin position="238"/>
        <end position="798"/>
    </location>
</feature>
<feature type="sequence conflict" description="In Ref. 2; AAL05977." evidence="3" ref="2">
    <original>R</original>
    <variation>P</variation>
    <location>
        <position position="25"/>
    </location>
</feature>
<feature type="sequence conflict" description="In Ref. 2; AAL05977 and 5; AAK28830." evidence="3" ref="2 5">
    <original>G</original>
    <variation>V</variation>
    <location>
        <position position="42"/>
    </location>
</feature>
<feature type="sequence conflict" description="In Ref. 2; AAL05977." evidence="3" ref="2">
    <original>R</original>
    <variation>P</variation>
    <location>
        <position position="103"/>
    </location>
</feature>
<feature type="sequence conflict" description="In Ref. 4; AAH13654." evidence="3" ref="4">
    <original>T</original>
    <variation>N</variation>
    <location>
        <position position="151"/>
    </location>
</feature>
<feature type="sequence conflict" description="In Ref. 2; AAL05976." evidence="3" ref="2">
    <original>S</original>
    <variation>L</variation>
    <location>
        <position position="248"/>
    </location>
</feature>
<feature type="sequence conflict" description="In Ref. 2; AAL05976." evidence="3" ref="2">
    <original>A</original>
    <variation>V</variation>
    <location>
        <position position="287"/>
    </location>
</feature>
<feature type="sequence conflict" description="In Ref. 1; AAF37272." evidence="3" ref="1">
    <original>K</original>
    <variation>E</variation>
    <location>
        <position position="595"/>
    </location>
</feature>
<proteinExistence type="evidence at protein level"/>
<reference key="1">
    <citation type="journal article" date="2000" name="Proc. Natl. Acad. Sci. U.S.A.">
        <title>Transferrin receptor 2: continued expression in mouse liver in the face of iron overload and in hereditary hemochromatosis.</title>
        <authorList>
            <person name="Fleming R.E."/>
            <person name="Migas M.C."/>
            <person name="Holden C.C."/>
            <person name="Waheed A."/>
            <person name="Britton R.S."/>
            <person name="Tomatsu S."/>
            <person name="Bacon B.R."/>
            <person name="Sly W.S."/>
        </authorList>
    </citation>
    <scope>NUCLEOTIDE SEQUENCE [MRNA] (ISOFORM 1)</scope>
    <source>
        <tissue>Embryo</tissue>
    </source>
</reference>
<reference key="2">
    <citation type="journal article" date="2001" name="Blood">
        <title>Regulation of expression of murine transferrin receptor 2.</title>
        <authorList>
            <person name="Kawabata H."/>
            <person name="Germain R.S."/>
            <person name="Ikezoe T."/>
            <person name="Tong X."/>
            <person name="Green E.M."/>
            <person name="Gombart A.F."/>
            <person name="Koeffler H.P."/>
        </authorList>
    </citation>
    <scope>NUCLEOTIDE SEQUENCE [MRNA] (ISOFORMS 1; 2 AND 3)</scope>
    <source>
        <tissue>Erythroleukemia</tissue>
    </source>
</reference>
<reference key="3">
    <citation type="journal article" date="2005" name="Science">
        <title>The transcriptional landscape of the mammalian genome.</title>
        <authorList>
            <person name="Carninci P."/>
            <person name="Kasukawa T."/>
            <person name="Katayama S."/>
            <person name="Gough J."/>
            <person name="Frith M.C."/>
            <person name="Maeda N."/>
            <person name="Oyama R."/>
            <person name="Ravasi T."/>
            <person name="Lenhard B."/>
            <person name="Wells C."/>
            <person name="Kodzius R."/>
            <person name="Shimokawa K."/>
            <person name="Bajic V.B."/>
            <person name="Brenner S.E."/>
            <person name="Batalov S."/>
            <person name="Forrest A.R."/>
            <person name="Zavolan M."/>
            <person name="Davis M.J."/>
            <person name="Wilming L.G."/>
            <person name="Aidinis V."/>
            <person name="Allen J.E."/>
            <person name="Ambesi-Impiombato A."/>
            <person name="Apweiler R."/>
            <person name="Aturaliya R.N."/>
            <person name="Bailey T.L."/>
            <person name="Bansal M."/>
            <person name="Baxter L."/>
            <person name="Beisel K.W."/>
            <person name="Bersano T."/>
            <person name="Bono H."/>
            <person name="Chalk A.M."/>
            <person name="Chiu K.P."/>
            <person name="Choudhary V."/>
            <person name="Christoffels A."/>
            <person name="Clutterbuck D.R."/>
            <person name="Crowe M.L."/>
            <person name="Dalla E."/>
            <person name="Dalrymple B.P."/>
            <person name="de Bono B."/>
            <person name="Della Gatta G."/>
            <person name="di Bernardo D."/>
            <person name="Down T."/>
            <person name="Engstrom P."/>
            <person name="Fagiolini M."/>
            <person name="Faulkner G."/>
            <person name="Fletcher C.F."/>
            <person name="Fukushima T."/>
            <person name="Furuno M."/>
            <person name="Futaki S."/>
            <person name="Gariboldi M."/>
            <person name="Georgii-Hemming P."/>
            <person name="Gingeras T.R."/>
            <person name="Gojobori T."/>
            <person name="Green R.E."/>
            <person name="Gustincich S."/>
            <person name="Harbers M."/>
            <person name="Hayashi Y."/>
            <person name="Hensch T.K."/>
            <person name="Hirokawa N."/>
            <person name="Hill D."/>
            <person name="Huminiecki L."/>
            <person name="Iacono M."/>
            <person name="Ikeo K."/>
            <person name="Iwama A."/>
            <person name="Ishikawa T."/>
            <person name="Jakt M."/>
            <person name="Kanapin A."/>
            <person name="Katoh M."/>
            <person name="Kawasawa Y."/>
            <person name="Kelso J."/>
            <person name="Kitamura H."/>
            <person name="Kitano H."/>
            <person name="Kollias G."/>
            <person name="Krishnan S.P."/>
            <person name="Kruger A."/>
            <person name="Kummerfeld S.K."/>
            <person name="Kurochkin I.V."/>
            <person name="Lareau L.F."/>
            <person name="Lazarevic D."/>
            <person name="Lipovich L."/>
            <person name="Liu J."/>
            <person name="Liuni S."/>
            <person name="McWilliam S."/>
            <person name="Madan Babu M."/>
            <person name="Madera M."/>
            <person name="Marchionni L."/>
            <person name="Matsuda H."/>
            <person name="Matsuzawa S."/>
            <person name="Miki H."/>
            <person name="Mignone F."/>
            <person name="Miyake S."/>
            <person name="Morris K."/>
            <person name="Mottagui-Tabar S."/>
            <person name="Mulder N."/>
            <person name="Nakano N."/>
            <person name="Nakauchi H."/>
            <person name="Ng P."/>
            <person name="Nilsson R."/>
            <person name="Nishiguchi S."/>
            <person name="Nishikawa S."/>
            <person name="Nori F."/>
            <person name="Ohara O."/>
            <person name="Okazaki Y."/>
            <person name="Orlando V."/>
            <person name="Pang K.C."/>
            <person name="Pavan W.J."/>
            <person name="Pavesi G."/>
            <person name="Pesole G."/>
            <person name="Petrovsky N."/>
            <person name="Piazza S."/>
            <person name="Reed J."/>
            <person name="Reid J.F."/>
            <person name="Ring B.Z."/>
            <person name="Ringwald M."/>
            <person name="Rost B."/>
            <person name="Ruan Y."/>
            <person name="Salzberg S.L."/>
            <person name="Sandelin A."/>
            <person name="Schneider C."/>
            <person name="Schoenbach C."/>
            <person name="Sekiguchi K."/>
            <person name="Semple C.A."/>
            <person name="Seno S."/>
            <person name="Sessa L."/>
            <person name="Sheng Y."/>
            <person name="Shibata Y."/>
            <person name="Shimada H."/>
            <person name="Shimada K."/>
            <person name="Silva D."/>
            <person name="Sinclair B."/>
            <person name="Sperling S."/>
            <person name="Stupka E."/>
            <person name="Sugiura K."/>
            <person name="Sultana R."/>
            <person name="Takenaka Y."/>
            <person name="Taki K."/>
            <person name="Tammoja K."/>
            <person name="Tan S.L."/>
            <person name="Tang S."/>
            <person name="Taylor M.S."/>
            <person name="Tegner J."/>
            <person name="Teichmann S.A."/>
            <person name="Ueda H.R."/>
            <person name="van Nimwegen E."/>
            <person name="Verardo R."/>
            <person name="Wei C.L."/>
            <person name="Yagi K."/>
            <person name="Yamanishi H."/>
            <person name="Zabarovsky E."/>
            <person name="Zhu S."/>
            <person name="Zimmer A."/>
            <person name="Hide W."/>
            <person name="Bult C."/>
            <person name="Grimmond S.M."/>
            <person name="Teasdale R.D."/>
            <person name="Liu E.T."/>
            <person name="Brusic V."/>
            <person name="Quackenbush J."/>
            <person name="Wahlestedt C."/>
            <person name="Mattick J.S."/>
            <person name="Hume D.A."/>
            <person name="Kai C."/>
            <person name="Sasaki D."/>
            <person name="Tomaru Y."/>
            <person name="Fukuda S."/>
            <person name="Kanamori-Katayama M."/>
            <person name="Suzuki M."/>
            <person name="Aoki J."/>
            <person name="Arakawa T."/>
            <person name="Iida J."/>
            <person name="Imamura K."/>
            <person name="Itoh M."/>
            <person name="Kato T."/>
            <person name="Kawaji H."/>
            <person name="Kawagashira N."/>
            <person name="Kawashima T."/>
            <person name="Kojima M."/>
            <person name="Kondo S."/>
            <person name="Konno H."/>
            <person name="Nakano K."/>
            <person name="Ninomiya N."/>
            <person name="Nishio T."/>
            <person name="Okada M."/>
            <person name="Plessy C."/>
            <person name="Shibata K."/>
            <person name="Shiraki T."/>
            <person name="Suzuki S."/>
            <person name="Tagami M."/>
            <person name="Waki K."/>
            <person name="Watahiki A."/>
            <person name="Okamura-Oho Y."/>
            <person name="Suzuki H."/>
            <person name="Kawai J."/>
            <person name="Hayashizaki Y."/>
        </authorList>
    </citation>
    <scope>NUCLEOTIDE SEQUENCE [LARGE SCALE MRNA] (ISOFORM 1)</scope>
    <source>
        <strain>C57BL/6J</strain>
        <tissue>Liver</tissue>
    </source>
</reference>
<reference key="4">
    <citation type="journal article" date="2004" name="Genome Res.">
        <title>The status, quality, and expansion of the NIH full-length cDNA project: the Mammalian Gene Collection (MGC).</title>
        <authorList>
            <consortium name="The MGC Project Team"/>
        </authorList>
    </citation>
    <scope>NUCLEOTIDE SEQUENCE [LARGE SCALE MRNA]</scope>
    <source>
        <tissue>Liver</tissue>
    </source>
</reference>
<reference key="5">
    <citation type="journal article" date="2001" name="Nucleic Acids Res.">
        <title>Comparative analysis of the gene-dense ACHE/TFR2 region on human chromosome 7q22 with the orthologous region on mouse chromosome 5.</title>
        <authorList>
            <person name="Wilson M.D."/>
            <person name="Riemer C."/>
            <person name="Martindale D.W."/>
            <person name="Schnupf P."/>
            <person name="Boright A.P."/>
            <person name="Cheung T.L."/>
            <person name="Hardy D.M."/>
            <person name="Schwartz S."/>
            <person name="Scherer S.W."/>
            <person name="Tsui L.-C."/>
            <person name="Miller W."/>
            <person name="Koop B.F."/>
        </authorList>
    </citation>
    <scope>NUCLEOTIDE SEQUENCE [GENOMIC DNA] OF 1-278</scope>
    <source>
        <strain>129/Sv</strain>
    </source>
</reference>
<reference key="6">
    <citation type="journal article" date="2010" name="Cell">
        <title>A tissue-specific atlas of mouse protein phosphorylation and expression.</title>
        <authorList>
            <person name="Huttlin E.L."/>
            <person name="Jedrychowski M.P."/>
            <person name="Elias J.E."/>
            <person name="Goswami T."/>
            <person name="Rad R."/>
            <person name="Beausoleil S.A."/>
            <person name="Villen J."/>
            <person name="Haas W."/>
            <person name="Sowa M.E."/>
            <person name="Gygi S.P."/>
        </authorList>
    </citation>
    <scope>IDENTIFICATION BY MASS SPECTROMETRY [LARGE SCALE ANALYSIS]</scope>
    <source>
        <tissue>Liver</tissue>
    </source>
</reference>
<keyword id="KW-0025">Alternative splicing</keyword>
<keyword id="KW-1003">Cell membrane</keyword>
<keyword id="KW-0963">Cytoplasm</keyword>
<keyword id="KW-1015">Disulfide bond</keyword>
<keyword id="KW-0325">Glycoprotein</keyword>
<keyword id="KW-0472">Membrane</keyword>
<keyword id="KW-0675">Receptor</keyword>
<keyword id="KW-1185">Reference proteome</keyword>
<keyword id="KW-0735">Signal-anchor</keyword>
<keyword id="KW-0812">Transmembrane</keyword>
<keyword id="KW-1133">Transmembrane helix</keyword>
<name>TFR2_MOUSE</name>
<sequence length="798" mass="88402">MEQRWGLLRRVQQWSPRPSQTIYRRVEGPQLEHLEEEDREEGAELPAQFCPMELKGPEHLGSCPGRSIPIPWAAAGRKAAPYLVLITLLIFTGAFLLGYVAFRGSCQACGDSVLVVDEDVNPEDSGRTTLYWSDLQAMFLRFLGEGRMEDTIRLTSLRERVAGSARMATLVQDILDKLSRQKLDHVWTDTHYVGLQFPDPAHANTLHWVDADGSVQEQLPLEDPEVYCPYSATGNATGKLVYAHYGRSEDLQDLKAKGVELAGSLLLVRVGITSFAQKVAVAQDFGAQGVLIYPDPSDFSQDPHKPGLSSHQAVYGHVHLGTGDPYTPGFPSFNQTQFPPVESSGLPSIPAQPISADIADQLLRKLTGPVAPQEWKGHLSGSPYRLGPGPDLRLVVNNHRVSTPISNIFACIEGFAEPDHYVVIGAQRDAWGPGAAKSAVGTAILLELVRTFSSMVSNGFRPRRSLLFISWDGGDFGSVGATEWLEGYLSVLHLKAVVYVSLDNSVLGDGKFHAKTSPLLVSLIENILKQVDSPNHSGQTLYEQVALTHPSWDAEVIQPLPMDSSAYSFTAFAGVPAVEFSFMEDDRVYPFLHTKEDTYENLHKMLRGRLPAVVQAVAQLAGQLLIRLSHDHLLPLDFGRYGDVVLRHIGNLNEFSGDLKERGLTLQWVYSARGDYIRAAEKLRKEIYSSERNDERLMRMYNVRIMRVEFYFLSQYVSPADSPFRHIFLGQGDHTLGALVDHLRMLRADGSGAASSRLTAGLGFQESRFRRQLALLTWTLQGAANALSGDVWNIDNNF</sequence>
<accession>Q9JKX3</accession>
<accession>Q920I6</accession>
<accession>Q99MQ9</accession>
<accession>Q9CPT2</accession>